<reference key="1">
    <citation type="journal article" date="2009" name="J. Bacteriol.">
        <title>Complete genome sequence of Erythrobacter litoralis HTCC2594.</title>
        <authorList>
            <person name="Oh H.M."/>
            <person name="Giovannoni S.J."/>
            <person name="Ferriera S."/>
            <person name="Johnson J."/>
            <person name="Cho J.C."/>
        </authorList>
    </citation>
    <scope>NUCLEOTIDE SEQUENCE [LARGE SCALE GENOMIC DNA]</scope>
    <source>
        <strain>HTCC2594</strain>
    </source>
</reference>
<accession>Q2N659</accession>
<organism>
    <name type="scientific">Erythrobacter litoralis (strain HTCC2594)</name>
    <dbReference type="NCBI Taxonomy" id="314225"/>
    <lineage>
        <taxon>Bacteria</taxon>
        <taxon>Pseudomonadati</taxon>
        <taxon>Pseudomonadota</taxon>
        <taxon>Alphaproteobacteria</taxon>
        <taxon>Sphingomonadales</taxon>
        <taxon>Erythrobacteraceae</taxon>
        <taxon>Erythrobacter/Porphyrobacter group</taxon>
        <taxon>Erythrobacter</taxon>
    </lineage>
</organism>
<protein>
    <recommendedName>
        <fullName evidence="1">Pantothenate synthetase</fullName>
        <shortName evidence="1">PS</shortName>
        <ecNumber evidence="1">6.3.2.1</ecNumber>
    </recommendedName>
    <alternativeName>
        <fullName evidence="1">Pantoate--beta-alanine ligase</fullName>
    </alternativeName>
    <alternativeName>
        <fullName evidence="1">Pantoate-activating enzyme</fullName>
    </alternativeName>
</protein>
<proteinExistence type="inferred from homology"/>
<evidence type="ECO:0000255" key="1">
    <source>
        <dbReference type="HAMAP-Rule" id="MF_00158"/>
    </source>
</evidence>
<feature type="chain" id="PRO_0000305442" description="Pantothenate synthetase">
    <location>
        <begin position="1"/>
        <end position="286"/>
    </location>
</feature>
<feature type="active site" description="Proton donor" evidence="1">
    <location>
        <position position="37"/>
    </location>
</feature>
<feature type="binding site" evidence="1">
    <location>
        <begin position="30"/>
        <end position="37"/>
    </location>
    <ligand>
        <name>ATP</name>
        <dbReference type="ChEBI" id="CHEBI:30616"/>
    </ligand>
</feature>
<feature type="binding site" evidence="1">
    <location>
        <position position="61"/>
    </location>
    <ligand>
        <name>(R)-pantoate</name>
        <dbReference type="ChEBI" id="CHEBI:15980"/>
    </ligand>
</feature>
<feature type="binding site" evidence="1">
    <location>
        <position position="61"/>
    </location>
    <ligand>
        <name>beta-alanine</name>
        <dbReference type="ChEBI" id="CHEBI:57966"/>
    </ligand>
</feature>
<feature type="binding site" evidence="1">
    <location>
        <begin position="147"/>
        <end position="150"/>
    </location>
    <ligand>
        <name>ATP</name>
        <dbReference type="ChEBI" id="CHEBI:30616"/>
    </ligand>
</feature>
<feature type="binding site" evidence="1">
    <location>
        <position position="153"/>
    </location>
    <ligand>
        <name>(R)-pantoate</name>
        <dbReference type="ChEBI" id="CHEBI:15980"/>
    </ligand>
</feature>
<feature type="binding site" evidence="1">
    <location>
        <position position="180"/>
    </location>
    <ligand>
        <name>ATP</name>
        <dbReference type="ChEBI" id="CHEBI:30616"/>
    </ligand>
</feature>
<feature type="binding site" evidence="1">
    <location>
        <begin position="188"/>
        <end position="191"/>
    </location>
    <ligand>
        <name>ATP</name>
        <dbReference type="ChEBI" id="CHEBI:30616"/>
    </ligand>
</feature>
<keyword id="KW-0067">ATP-binding</keyword>
<keyword id="KW-0963">Cytoplasm</keyword>
<keyword id="KW-0436">Ligase</keyword>
<keyword id="KW-0547">Nucleotide-binding</keyword>
<keyword id="KW-0566">Pantothenate biosynthesis</keyword>
<keyword id="KW-1185">Reference proteome</keyword>
<comment type="function">
    <text evidence="1">Catalyzes the condensation of pantoate with beta-alanine in an ATP-dependent reaction via a pantoyl-adenylate intermediate.</text>
</comment>
<comment type="catalytic activity">
    <reaction evidence="1">
        <text>(R)-pantoate + beta-alanine + ATP = (R)-pantothenate + AMP + diphosphate + H(+)</text>
        <dbReference type="Rhea" id="RHEA:10912"/>
        <dbReference type="ChEBI" id="CHEBI:15378"/>
        <dbReference type="ChEBI" id="CHEBI:15980"/>
        <dbReference type="ChEBI" id="CHEBI:29032"/>
        <dbReference type="ChEBI" id="CHEBI:30616"/>
        <dbReference type="ChEBI" id="CHEBI:33019"/>
        <dbReference type="ChEBI" id="CHEBI:57966"/>
        <dbReference type="ChEBI" id="CHEBI:456215"/>
        <dbReference type="EC" id="6.3.2.1"/>
    </reaction>
</comment>
<comment type="pathway">
    <text evidence="1">Cofactor biosynthesis; (R)-pantothenate biosynthesis; (R)-pantothenate from (R)-pantoate and beta-alanine: step 1/1.</text>
</comment>
<comment type="subunit">
    <text evidence="1">Homodimer.</text>
</comment>
<comment type="subcellular location">
    <subcellularLocation>
        <location evidence="1">Cytoplasm</location>
    </subcellularLocation>
</comment>
<comment type="miscellaneous">
    <text evidence="1">The reaction proceeds by a bi uni uni bi ping pong mechanism.</text>
</comment>
<comment type="similarity">
    <text evidence="1">Belongs to the pantothenate synthetase family.</text>
</comment>
<sequence>MQTIDRLDMLRTSVAALRQGGGTVALVPTMGALHEGHLTLVREAAGRADHVVASIFVNPTQFGPNEDLDAYPRQLAEDCAMLEAEGVALVWAPTVEQMYPEGFASSISVSGVSEGLCGADRPGHFDGVATVVCKLFHQVLPDMAFFGEKDWQQLAVIRVMARDLDLTRPHVAAIRGVATVREEDGLAMSSRNRYLSPEHRQAAAILPRAMKEAIGAIENGAAVAPTLASLEAALLQAGFDSVDYATLADAANLQPLERLAMRPARLLVAARIGGTRLIDNMAVGKV</sequence>
<dbReference type="EC" id="6.3.2.1" evidence="1"/>
<dbReference type="EMBL" id="CP000157">
    <property type="protein sequence ID" value="ABC64832.1"/>
    <property type="molecule type" value="Genomic_DNA"/>
</dbReference>
<dbReference type="RefSeq" id="WP_011415654.1">
    <property type="nucleotide sequence ID" value="NC_007722.1"/>
</dbReference>
<dbReference type="SMR" id="Q2N659"/>
<dbReference type="STRING" id="314225.ELI_13700"/>
<dbReference type="KEGG" id="eli:ELI_13700"/>
<dbReference type="eggNOG" id="COG0414">
    <property type="taxonomic scope" value="Bacteria"/>
</dbReference>
<dbReference type="HOGENOM" id="CLU_047148_0_0_5"/>
<dbReference type="OrthoDB" id="9773087at2"/>
<dbReference type="UniPathway" id="UPA00028">
    <property type="reaction ID" value="UER00005"/>
</dbReference>
<dbReference type="Proteomes" id="UP000008808">
    <property type="component" value="Chromosome"/>
</dbReference>
<dbReference type="GO" id="GO:0005829">
    <property type="term" value="C:cytosol"/>
    <property type="evidence" value="ECO:0007669"/>
    <property type="project" value="TreeGrafter"/>
</dbReference>
<dbReference type="GO" id="GO:0005524">
    <property type="term" value="F:ATP binding"/>
    <property type="evidence" value="ECO:0007669"/>
    <property type="project" value="UniProtKB-KW"/>
</dbReference>
<dbReference type="GO" id="GO:0004592">
    <property type="term" value="F:pantoate-beta-alanine ligase activity"/>
    <property type="evidence" value="ECO:0007669"/>
    <property type="project" value="UniProtKB-UniRule"/>
</dbReference>
<dbReference type="GO" id="GO:0015940">
    <property type="term" value="P:pantothenate biosynthetic process"/>
    <property type="evidence" value="ECO:0007669"/>
    <property type="project" value="UniProtKB-UniRule"/>
</dbReference>
<dbReference type="CDD" id="cd00560">
    <property type="entry name" value="PanC"/>
    <property type="match status" value="1"/>
</dbReference>
<dbReference type="FunFam" id="3.40.50.620:FF:000013">
    <property type="entry name" value="Pantothenate synthetase"/>
    <property type="match status" value="1"/>
</dbReference>
<dbReference type="Gene3D" id="3.40.50.620">
    <property type="entry name" value="HUPs"/>
    <property type="match status" value="1"/>
</dbReference>
<dbReference type="Gene3D" id="3.30.1300.10">
    <property type="entry name" value="Pantoate-beta-alanine ligase, C-terminal domain"/>
    <property type="match status" value="1"/>
</dbReference>
<dbReference type="HAMAP" id="MF_00158">
    <property type="entry name" value="PanC"/>
    <property type="match status" value="1"/>
</dbReference>
<dbReference type="InterPro" id="IPR004821">
    <property type="entry name" value="Cyt_trans-like"/>
</dbReference>
<dbReference type="InterPro" id="IPR003721">
    <property type="entry name" value="Pantoate_ligase"/>
</dbReference>
<dbReference type="InterPro" id="IPR042176">
    <property type="entry name" value="Pantoate_ligase_C"/>
</dbReference>
<dbReference type="InterPro" id="IPR014729">
    <property type="entry name" value="Rossmann-like_a/b/a_fold"/>
</dbReference>
<dbReference type="NCBIfam" id="TIGR00125">
    <property type="entry name" value="cyt_tran_rel"/>
    <property type="match status" value="1"/>
</dbReference>
<dbReference type="NCBIfam" id="TIGR00018">
    <property type="entry name" value="panC"/>
    <property type="match status" value="1"/>
</dbReference>
<dbReference type="PANTHER" id="PTHR21299">
    <property type="entry name" value="CYTIDYLATE KINASE/PANTOATE-BETA-ALANINE LIGASE"/>
    <property type="match status" value="1"/>
</dbReference>
<dbReference type="PANTHER" id="PTHR21299:SF1">
    <property type="entry name" value="PANTOATE--BETA-ALANINE LIGASE"/>
    <property type="match status" value="1"/>
</dbReference>
<dbReference type="Pfam" id="PF02569">
    <property type="entry name" value="Pantoate_ligase"/>
    <property type="match status" value="1"/>
</dbReference>
<dbReference type="SUPFAM" id="SSF52374">
    <property type="entry name" value="Nucleotidylyl transferase"/>
    <property type="match status" value="1"/>
</dbReference>
<gene>
    <name evidence="1" type="primary">panC</name>
    <name type="ordered locus">ELI_13700</name>
</gene>
<name>PANC_ERYLH</name>